<keyword id="KW-1185">Reference proteome</keyword>
<keyword id="KW-0687">Ribonucleoprotein</keyword>
<keyword id="KW-0689">Ribosomal protein</keyword>
<keyword id="KW-0694">RNA-binding</keyword>
<keyword id="KW-0699">rRNA-binding</keyword>
<comment type="function">
    <text evidence="1">One of the early assembly proteins it binds 23S rRNA. One of the proteins that surrounds the polypeptide exit tunnel on the outside of the ribosome. Forms the main docking site for trigger factor binding to the ribosome.</text>
</comment>
<comment type="subunit">
    <text evidence="1">Part of the 50S ribosomal subunit. Contacts protein L29, and trigger factor when it is bound to the ribosome.</text>
</comment>
<comment type="similarity">
    <text evidence="1">Belongs to the universal ribosomal protein uL23 family.</text>
</comment>
<organism>
    <name type="scientific">Idiomarina loihiensis (strain ATCC BAA-735 / DSM 15497 / L2-TR)</name>
    <dbReference type="NCBI Taxonomy" id="283942"/>
    <lineage>
        <taxon>Bacteria</taxon>
        <taxon>Pseudomonadati</taxon>
        <taxon>Pseudomonadota</taxon>
        <taxon>Gammaproteobacteria</taxon>
        <taxon>Alteromonadales</taxon>
        <taxon>Idiomarinaceae</taxon>
        <taxon>Idiomarina</taxon>
    </lineage>
</organism>
<proteinExistence type="inferred from homology"/>
<sequence>MMREERLLKVILAPHVSEKSTNTAENNNTVVFKVAVDATKTEIKAAVEKLFEVEVKNVRTVNVKGKTKRTGSRFGKRSDWKKAYVALNEGADIDFSGGAE</sequence>
<feature type="chain" id="PRO_0000272761" description="Large ribosomal subunit protein uL23">
    <location>
        <begin position="1"/>
        <end position="100"/>
    </location>
</feature>
<protein>
    <recommendedName>
        <fullName evidence="1">Large ribosomal subunit protein uL23</fullName>
    </recommendedName>
    <alternativeName>
        <fullName evidence="2">50S ribosomal protein L23</fullName>
    </alternativeName>
</protein>
<reference key="1">
    <citation type="journal article" date="2004" name="Proc. Natl. Acad. Sci. U.S.A.">
        <title>Genome sequence of the deep-sea gamma-proteobacterium Idiomarina loihiensis reveals amino acid fermentation as a source of carbon and energy.</title>
        <authorList>
            <person name="Hou S."/>
            <person name="Saw J.H."/>
            <person name="Lee K.S."/>
            <person name="Freitas T.A."/>
            <person name="Belisle C."/>
            <person name="Kawarabayasi Y."/>
            <person name="Donachie S.P."/>
            <person name="Pikina A."/>
            <person name="Galperin M.Y."/>
            <person name="Koonin E.V."/>
            <person name="Makarova K.S."/>
            <person name="Omelchenko M.V."/>
            <person name="Sorokin A."/>
            <person name="Wolf Y.I."/>
            <person name="Li Q.X."/>
            <person name="Keum Y.S."/>
            <person name="Campbell S."/>
            <person name="Denery J."/>
            <person name="Aizawa S."/>
            <person name="Shibata S."/>
            <person name="Malahoff A."/>
            <person name="Alam M."/>
        </authorList>
    </citation>
    <scope>NUCLEOTIDE SEQUENCE [LARGE SCALE GENOMIC DNA]</scope>
    <source>
        <strain>ATCC BAA-735 / DSM 15497 / L2-TR</strain>
    </source>
</reference>
<evidence type="ECO:0000255" key="1">
    <source>
        <dbReference type="HAMAP-Rule" id="MF_01369"/>
    </source>
</evidence>
<evidence type="ECO:0000305" key="2"/>
<accession>Q5QXX9</accession>
<name>RL23_IDILO</name>
<dbReference type="EMBL" id="AE017340">
    <property type="protein sequence ID" value="AAV82754.1"/>
    <property type="molecule type" value="Genomic_DNA"/>
</dbReference>
<dbReference type="RefSeq" id="WP_011235151.1">
    <property type="nucleotide sequence ID" value="NC_006512.1"/>
</dbReference>
<dbReference type="SMR" id="Q5QXX9"/>
<dbReference type="STRING" id="283942.IL1922"/>
<dbReference type="GeneID" id="41337110"/>
<dbReference type="KEGG" id="ilo:IL1922"/>
<dbReference type="eggNOG" id="COG0089">
    <property type="taxonomic scope" value="Bacteria"/>
</dbReference>
<dbReference type="HOGENOM" id="CLU_037562_3_1_6"/>
<dbReference type="OrthoDB" id="9793353at2"/>
<dbReference type="Proteomes" id="UP000001171">
    <property type="component" value="Chromosome"/>
</dbReference>
<dbReference type="GO" id="GO:1990904">
    <property type="term" value="C:ribonucleoprotein complex"/>
    <property type="evidence" value="ECO:0007669"/>
    <property type="project" value="UniProtKB-KW"/>
</dbReference>
<dbReference type="GO" id="GO:0005840">
    <property type="term" value="C:ribosome"/>
    <property type="evidence" value="ECO:0007669"/>
    <property type="project" value="UniProtKB-KW"/>
</dbReference>
<dbReference type="GO" id="GO:0019843">
    <property type="term" value="F:rRNA binding"/>
    <property type="evidence" value="ECO:0007669"/>
    <property type="project" value="UniProtKB-UniRule"/>
</dbReference>
<dbReference type="GO" id="GO:0003735">
    <property type="term" value="F:structural constituent of ribosome"/>
    <property type="evidence" value="ECO:0007669"/>
    <property type="project" value="InterPro"/>
</dbReference>
<dbReference type="GO" id="GO:0006412">
    <property type="term" value="P:translation"/>
    <property type="evidence" value="ECO:0007669"/>
    <property type="project" value="UniProtKB-UniRule"/>
</dbReference>
<dbReference type="FunFam" id="3.30.70.330:FF:000001">
    <property type="entry name" value="50S ribosomal protein L23"/>
    <property type="match status" value="1"/>
</dbReference>
<dbReference type="Gene3D" id="3.30.70.330">
    <property type="match status" value="1"/>
</dbReference>
<dbReference type="HAMAP" id="MF_01369_B">
    <property type="entry name" value="Ribosomal_uL23_B"/>
    <property type="match status" value="1"/>
</dbReference>
<dbReference type="InterPro" id="IPR012677">
    <property type="entry name" value="Nucleotide-bd_a/b_plait_sf"/>
</dbReference>
<dbReference type="InterPro" id="IPR013025">
    <property type="entry name" value="Ribosomal_uL23-like"/>
</dbReference>
<dbReference type="InterPro" id="IPR012678">
    <property type="entry name" value="Ribosomal_uL23/eL15/eS24_sf"/>
</dbReference>
<dbReference type="NCBIfam" id="NF004358">
    <property type="entry name" value="PRK05738.1-1"/>
    <property type="match status" value="1"/>
</dbReference>
<dbReference type="NCBIfam" id="NF004359">
    <property type="entry name" value="PRK05738.1-3"/>
    <property type="match status" value="1"/>
</dbReference>
<dbReference type="NCBIfam" id="NF004363">
    <property type="entry name" value="PRK05738.2-4"/>
    <property type="match status" value="1"/>
</dbReference>
<dbReference type="NCBIfam" id="NF004366">
    <property type="entry name" value="PRK05738.3-2"/>
    <property type="match status" value="1"/>
</dbReference>
<dbReference type="PANTHER" id="PTHR11620">
    <property type="entry name" value="60S RIBOSOMAL PROTEIN L23A"/>
    <property type="match status" value="1"/>
</dbReference>
<dbReference type="Pfam" id="PF00276">
    <property type="entry name" value="Ribosomal_L23"/>
    <property type="match status" value="1"/>
</dbReference>
<dbReference type="SUPFAM" id="SSF54189">
    <property type="entry name" value="Ribosomal proteins S24e, L23 and L15e"/>
    <property type="match status" value="1"/>
</dbReference>
<gene>
    <name evidence="1" type="primary">rplW</name>
    <name type="ordered locus">IL1922</name>
</gene>